<organism>
    <name type="scientific">Saccharomyces cerevisiae (strain ATCC 204508 / S288c)</name>
    <name type="common">Baker's yeast</name>
    <dbReference type="NCBI Taxonomy" id="559292"/>
    <lineage>
        <taxon>Eukaryota</taxon>
        <taxon>Fungi</taxon>
        <taxon>Dikarya</taxon>
        <taxon>Ascomycota</taxon>
        <taxon>Saccharomycotina</taxon>
        <taxon>Saccharomycetes</taxon>
        <taxon>Saccharomycetales</taxon>
        <taxon>Saccharomycetaceae</taxon>
        <taxon>Saccharomyces</taxon>
    </lineage>
</organism>
<reference key="1">
    <citation type="journal article" date="1994" name="Gene">
        <title>YKE2, a yeast nuclear gene encoding a protein showing homology to mouse KE2 and containing a putative leucine-zipper motif.</title>
        <authorList>
            <person name="Shang H.-S."/>
            <person name="Wong S.-M."/>
            <person name="Tan H.-M."/>
            <person name="Wu M."/>
        </authorList>
    </citation>
    <scope>NUCLEOTIDE SEQUENCE [GENOMIC DNA]</scope>
    <source>
        <strain>D273-10B/AL</strain>
    </source>
</reference>
<reference key="2">
    <citation type="journal article" date="1997" name="Nature">
        <title>The nucleotide sequence of Saccharomyces cerevisiae chromosome XII.</title>
        <authorList>
            <person name="Johnston M."/>
            <person name="Hillier L.W."/>
            <person name="Riles L."/>
            <person name="Albermann K."/>
            <person name="Andre B."/>
            <person name="Ansorge W."/>
            <person name="Benes V."/>
            <person name="Brueckner M."/>
            <person name="Delius H."/>
            <person name="Dubois E."/>
            <person name="Duesterhoeft A."/>
            <person name="Entian K.-D."/>
            <person name="Floeth M."/>
            <person name="Goffeau A."/>
            <person name="Hebling U."/>
            <person name="Heumann K."/>
            <person name="Heuss-Neitzel D."/>
            <person name="Hilbert H."/>
            <person name="Hilger F."/>
            <person name="Kleine K."/>
            <person name="Koetter P."/>
            <person name="Louis E.J."/>
            <person name="Messenguy F."/>
            <person name="Mewes H.-W."/>
            <person name="Miosga T."/>
            <person name="Moestl D."/>
            <person name="Mueller-Auer S."/>
            <person name="Nentwich U."/>
            <person name="Obermaier B."/>
            <person name="Piravandi E."/>
            <person name="Pohl T.M."/>
            <person name="Portetelle D."/>
            <person name="Purnelle B."/>
            <person name="Rechmann S."/>
            <person name="Rieger M."/>
            <person name="Rinke M."/>
            <person name="Rose M."/>
            <person name="Scharfe M."/>
            <person name="Scherens B."/>
            <person name="Scholler P."/>
            <person name="Schwager C."/>
            <person name="Schwarz S."/>
            <person name="Underwood A.P."/>
            <person name="Urrestarazu L.A."/>
            <person name="Vandenbol M."/>
            <person name="Verhasselt P."/>
            <person name="Vierendeels F."/>
            <person name="Voet M."/>
            <person name="Volckaert G."/>
            <person name="Voss H."/>
            <person name="Wambutt R."/>
            <person name="Wedler E."/>
            <person name="Wedler H."/>
            <person name="Zimmermann F.K."/>
            <person name="Zollner A."/>
            <person name="Hani J."/>
            <person name="Hoheisel J.D."/>
        </authorList>
    </citation>
    <scope>NUCLEOTIDE SEQUENCE [LARGE SCALE GENOMIC DNA]</scope>
    <source>
        <strain>ATCC 204508 / S288c</strain>
    </source>
</reference>
<reference key="3">
    <citation type="journal article" date="2014" name="G3 (Bethesda)">
        <title>The reference genome sequence of Saccharomyces cerevisiae: Then and now.</title>
        <authorList>
            <person name="Engel S.R."/>
            <person name="Dietrich F.S."/>
            <person name="Fisk D.G."/>
            <person name="Binkley G."/>
            <person name="Balakrishnan R."/>
            <person name="Costanzo M.C."/>
            <person name="Dwight S.S."/>
            <person name="Hitz B.C."/>
            <person name="Karra K."/>
            <person name="Nash R.S."/>
            <person name="Weng S."/>
            <person name="Wong E.D."/>
            <person name="Lloyd P."/>
            <person name="Skrzypek M.S."/>
            <person name="Miyasato S.R."/>
            <person name="Simison M."/>
            <person name="Cherry J.M."/>
        </authorList>
    </citation>
    <scope>GENOME REANNOTATION</scope>
    <source>
        <strain>ATCC 204508 / S288c</strain>
    </source>
</reference>
<reference key="4">
    <citation type="journal article" date="1998" name="EMBO J.">
        <title>A novel protein complex promoting formation of functional alpha- and gamma-tubulin.</title>
        <authorList>
            <person name="Geissler S."/>
            <person name="Siegers K."/>
            <person name="Schiebel E."/>
        </authorList>
    </citation>
    <scope>CHARACTERIZATION</scope>
</reference>
<reference key="5">
    <citation type="journal article" date="1999" name="EMBO J.">
        <title>Compartmentation of protein folding in vivo: sequestration of non-native polypeptide by the chaperonin-GimC system.</title>
        <authorList>
            <person name="Siegers K."/>
            <person name="Waldmann T."/>
            <person name="Leroux M.R."/>
            <person name="Grein K."/>
            <person name="Shevchenko A."/>
            <person name="Schiebel E."/>
            <person name="Hartl F.U."/>
        </authorList>
    </citation>
    <scope>IDENTIFICATION IN THE PREFOLDIN COMPLEX</scope>
</reference>
<reference key="6">
    <citation type="journal article" date="2003" name="Nature">
        <title>Global analysis of protein expression in yeast.</title>
        <authorList>
            <person name="Ghaemmaghami S."/>
            <person name="Huh W.-K."/>
            <person name="Bower K."/>
            <person name="Howson R.W."/>
            <person name="Belle A."/>
            <person name="Dephoure N."/>
            <person name="O'Shea E.K."/>
            <person name="Weissman J.S."/>
        </authorList>
    </citation>
    <scope>LEVEL OF PROTEIN EXPRESSION [LARGE SCALE ANALYSIS]</scope>
</reference>
<reference key="7">
    <citation type="journal article" date="2012" name="Proc. Natl. Acad. Sci. U.S.A.">
        <title>N-terminal acetylome analyses and functional insights of the N-terminal acetyltransferase NatB.</title>
        <authorList>
            <person name="Van Damme P."/>
            <person name="Lasa M."/>
            <person name="Polevoda B."/>
            <person name="Gazquez C."/>
            <person name="Elosegui-Artola A."/>
            <person name="Kim D.S."/>
            <person name="De Juan-Pardo E."/>
            <person name="Demeyer K."/>
            <person name="Hole K."/>
            <person name="Larrea E."/>
            <person name="Timmerman E."/>
            <person name="Prieto J."/>
            <person name="Arnesen T."/>
            <person name="Sherman F."/>
            <person name="Gevaert K."/>
            <person name="Aldabe R."/>
        </authorList>
    </citation>
    <scope>ACETYLATION [LARGE SCALE ANALYSIS] AT SER-2</scope>
    <scope>CLEAVAGE OF INITIATOR METHIONINE [LARGE SCALE ANALYSIS]</scope>
    <scope>IDENTIFICATION BY MASS SPECTROMETRY [LARGE SCALE ANALYSIS]</scope>
</reference>
<dbReference type="EMBL" id="X76563">
    <property type="protein sequence ID" value="CAA54062.1"/>
    <property type="molecule type" value="Genomic_DNA"/>
</dbReference>
<dbReference type="EMBL" id="U14913">
    <property type="protein sequence ID" value="AAB67430.1"/>
    <property type="molecule type" value="Genomic_DNA"/>
</dbReference>
<dbReference type="EMBL" id="BK006945">
    <property type="protein sequence ID" value="DAA09518.1"/>
    <property type="molecule type" value="Genomic_DNA"/>
</dbReference>
<dbReference type="PIR" id="S48552">
    <property type="entry name" value="S48552"/>
</dbReference>
<dbReference type="RefSeq" id="NP_013301.1">
    <property type="nucleotide sequence ID" value="NM_001182087.1"/>
</dbReference>
<dbReference type="SMR" id="P52553"/>
<dbReference type="BioGRID" id="31469">
    <property type="interactions" value="738"/>
</dbReference>
<dbReference type="ComplexPortal" id="CPX-1671">
    <property type="entry name" value="Prefoldin co-chaperone complex"/>
</dbReference>
<dbReference type="DIP" id="DIP-1333N"/>
<dbReference type="FunCoup" id="P52553">
    <property type="interactions" value="1004"/>
</dbReference>
<dbReference type="IntAct" id="P52553">
    <property type="interactions" value="16"/>
</dbReference>
<dbReference type="MINT" id="P52553"/>
<dbReference type="STRING" id="4932.YLR200W"/>
<dbReference type="iPTMnet" id="P52553"/>
<dbReference type="PaxDb" id="4932-YLR200W"/>
<dbReference type="PeptideAtlas" id="P52553"/>
<dbReference type="EnsemblFungi" id="YLR200W_mRNA">
    <property type="protein sequence ID" value="YLR200W"/>
    <property type="gene ID" value="YLR200W"/>
</dbReference>
<dbReference type="GeneID" id="850897"/>
<dbReference type="KEGG" id="sce:YLR200W"/>
<dbReference type="AGR" id="SGD:S000004190"/>
<dbReference type="SGD" id="S000004190">
    <property type="gene designation" value="YKE2"/>
</dbReference>
<dbReference type="VEuPathDB" id="FungiDB:YLR200W"/>
<dbReference type="eggNOG" id="KOG3478">
    <property type="taxonomic scope" value="Eukaryota"/>
</dbReference>
<dbReference type="GeneTree" id="ENSGT00390000010512"/>
<dbReference type="HOGENOM" id="CLU_125172_1_1_1"/>
<dbReference type="InParanoid" id="P52553"/>
<dbReference type="OMA" id="VQTEFAQ"/>
<dbReference type="OrthoDB" id="248120at2759"/>
<dbReference type="BioCyc" id="YEAST:G3O-32320-MONOMER"/>
<dbReference type="BioGRID-ORCS" id="850897">
    <property type="hits" value="3 hits in 10 CRISPR screens"/>
</dbReference>
<dbReference type="PRO" id="PR:P52553"/>
<dbReference type="Proteomes" id="UP000002311">
    <property type="component" value="Chromosome XII"/>
</dbReference>
<dbReference type="RNAct" id="P52553">
    <property type="molecule type" value="protein"/>
</dbReference>
<dbReference type="GO" id="GO:0005737">
    <property type="term" value="C:cytoplasm"/>
    <property type="evidence" value="ECO:0000314"/>
    <property type="project" value="SGD"/>
</dbReference>
<dbReference type="GO" id="GO:0005634">
    <property type="term" value="C:nucleus"/>
    <property type="evidence" value="ECO:0007669"/>
    <property type="project" value="UniProtKB-SubCell"/>
</dbReference>
<dbReference type="GO" id="GO:0016272">
    <property type="term" value="C:prefoldin complex"/>
    <property type="evidence" value="ECO:0000353"/>
    <property type="project" value="ComplexPortal"/>
</dbReference>
<dbReference type="GO" id="GO:0051087">
    <property type="term" value="F:protein-folding chaperone binding"/>
    <property type="evidence" value="ECO:0000318"/>
    <property type="project" value="GO_Central"/>
</dbReference>
<dbReference type="GO" id="GO:0015631">
    <property type="term" value="F:tubulin binding"/>
    <property type="evidence" value="ECO:0000314"/>
    <property type="project" value="SGD"/>
</dbReference>
<dbReference type="GO" id="GO:0051082">
    <property type="term" value="F:unfolded protein binding"/>
    <property type="evidence" value="ECO:0007669"/>
    <property type="project" value="InterPro"/>
</dbReference>
<dbReference type="GO" id="GO:0051131">
    <property type="term" value="P:chaperone-mediated protein complex assembly"/>
    <property type="evidence" value="ECO:0000318"/>
    <property type="project" value="GO_Central"/>
</dbReference>
<dbReference type="GO" id="GO:0032968">
    <property type="term" value="P:positive regulation of transcription elongation by RNA polymerase II"/>
    <property type="evidence" value="ECO:0000315"/>
    <property type="project" value="SGD"/>
</dbReference>
<dbReference type="GO" id="GO:0006457">
    <property type="term" value="P:protein folding"/>
    <property type="evidence" value="ECO:0000315"/>
    <property type="project" value="SGD"/>
</dbReference>
<dbReference type="GO" id="GO:0007021">
    <property type="term" value="P:tubulin complex assembly"/>
    <property type="evidence" value="ECO:0000315"/>
    <property type="project" value="SGD"/>
</dbReference>
<dbReference type="CDD" id="cd23161">
    <property type="entry name" value="Prefoldin_6"/>
    <property type="match status" value="1"/>
</dbReference>
<dbReference type="FunFam" id="1.10.287.370:FF:000003">
    <property type="entry name" value="Prefoldin subunit 6"/>
    <property type="match status" value="1"/>
</dbReference>
<dbReference type="Gene3D" id="1.10.287.370">
    <property type="match status" value="1"/>
</dbReference>
<dbReference type="InterPro" id="IPR002777">
    <property type="entry name" value="PFD_beta-like"/>
</dbReference>
<dbReference type="InterPro" id="IPR009053">
    <property type="entry name" value="Prefoldin"/>
</dbReference>
<dbReference type="PANTHER" id="PTHR21431">
    <property type="entry name" value="PREFOLDIN SUBUNIT 6"/>
    <property type="match status" value="1"/>
</dbReference>
<dbReference type="PANTHER" id="PTHR21431:SF0">
    <property type="entry name" value="PREFOLDIN SUBUNIT 6"/>
    <property type="match status" value="1"/>
</dbReference>
<dbReference type="Pfam" id="PF01920">
    <property type="entry name" value="Prefoldin_2"/>
    <property type="match status" value="1"/>
</dbReference>
<dbReference type="SUPFAM" id="SSF46579">
    <property type="entry name" value="Prefoldin"/>
    <property type="match status" value="1"/>
</dbReference>
<protein>
    <recommendedName>
        <fullName>Prefoldin subunit 6</fullName>
    </recommendedName>
    <alternativeName>
        <fullName>Genes involved in microtubule biogenesis protein 1</fullName>
    </alternativeName>
    <alternativeName>
        <fullName>Gim complex subunit 1</fullName>
        <shortName>GimC subunit 1</shortName>
    </alternativeName>
</protein>
<evidence type="ECO:0000269" key="1">
    <source>
    </source>
</evidence>
<evidence type="ECO:0000269" key="2">
    <source>
    </source>
</evidence>
<evidence type="ECO:0000305" key="3"/>
<evidence type="ECO:0007744" key="4">
    <source>
    </source>
</evidence>
<name>PFD6_YEAST</name>
<accession>P52553</accession>
<accession>D6VYK2</accession>
<gene>
    <name type="primary">YKE2</name>
    <name type="synonym">GIM1</name>
    <name type="synonym">PFD6</name>
    <name type="ordered locus">YLR200W</name>
    <name type="ORF">L8167.8</name>
</gene>
<comment type="function">
    <text>Binds specifically to cytosolic chaperonin (c-CPN) and transfers target proteins to it. Binds to nascent polypeptide chain and promotes folding in an environment in which there are many competing pathways for nonnative proteins.</text>
</comment>
<comment type="subunit">
    <text evidence="2">Heterohexamer of two PFD-alpha type and four PFD-beta type subunits.</text>
</comment>
<comment type="interaction">
    <interactant intactId="EBI-13260">
        <id>P52553</id>
    </interactant>
    <interactant intactId="EBI-22787">
        <id>P43573</id>
        <label>BUD27</label>
    </interactant>
    <organismsDiffer>false</organismsDiffer>
    <experiments>3</experiments>
</comment>
<comment type="interaction">
    <interactant intactId="EBI-13260">
        <id>P52553</id>
    </interactant>
    <interactant intactId="EBI-13246">
        <id>P53900</id>
        <label>GIM3</label>
    </interactant>
    <organismsDiffer>false</organismsDiffer>
    <experiments>3</experiments>
</comment>
<comment type="interaction">
    <interactant intactId="EBI-13260">
        <id>P52553</id>
    </interactant>
    <interactant intactId="EBI-13253">
        <id>Q04493</id>
        <label>GIM5</label>
    </interactant>
    <organismsDiffer>false</organismsDiffer>
    <experiments>5</experiments>
</comment>
<comment type="interaction">
    <interactant intactId="EBI-13260">
        <id>P52553</id>
    </interactant>
    <interactant intactId="EBI-13239">
        <id>P48363</id>
        <label>PAC10</label>
    </interactant>
    <organismsDiffer>false</organismsDiffer>
    <experiments>6</experiments>
</comment>
<comment type="subcellular location">
    <subcellularLocation>
        <location>Nucleus</location>
    </subcellularLocation>
</comment>
<comment type="miscellaneous">
    <text evidence="1">Present with 784 molecules/cell in log phase SD medium.</text>
</comment>
<comment type="similarity">
    <text evidence="3">Belongs to the prefoldin subunit beta family.</text>
</comment>
<feature type="initiator methionine" description="Removed" evidence="4">
    <location>
        <position position="1"/>
    </location>
</feature>
<feature type="chain" id="PRO_0000124855" description="Prefoldin subunit 6">
    <location>
        <begin position="2"/>
        <end position="114"/>
    </location>
</feature>
<feature type="modified residue" description="N-acetylserine" evidence="4">
    <location>
        <position position="2"/>
    </location>
</feature>
<keyword id="KW-0007">Acetylation</keyword>
<keyword id="KW-0143">Chaperone</keyword>
<keyword id="KW-0539">Nucleus</keyword>
<keyword id="KW-1185">Reference proteome</keyword>
<proteinExistence type="evidence at protein level"/>
<sequence>MSELGAKYQQLQNELEEFIVARQKLETQLQENKIVNEEFDQLEEDTPVYKLTGNVLLPVEQSEARTNVDKRLEFIETEITRCEKNIRDKQEELEKMRSELIKLNNTAASTGPGR</sequence>